<protein>
    <recommendedName>
        <fullName evidence="1">Serine--tRNA ligase</fullName>
        <ecNumber evidence="1">6.1.1.11</ecNumber>
    </recommendedName>
    <alternativeName>
        <fullName evidence="1">Seryl-tRNA synthetase</fullName>
        <shortName evidence="1">SerRS</shortName>
    </alternativeName>
    <alternativeName>
        <fullName evidence="1">Seryl-tRNA(Ser/Sec) synthetase</fullName>
    </alternativeName>
</protein>
<sequence length="423" mass="49073">MLNLKFIIENIEKVIEKLNTRTGDFSYLNKLLVLNIKKKKLIFNIETLRYQQNKISKEISILKQNKTNTENIFERSIFLKNEIHVLENDFKKTDSEISEILNNIPNLPHESVILLSKDNNKINFKKYLSPKKFNFNIKDHVTLGRNLNILDFDRASKITGSRFIVYKGLGARLERSLIQFMMDLHSEKGYIEIIPPFIVNDISMFSTGQLPKFKNDSYRLENSNNWYLNPTGEVPAINLHRNEVLSQKNLPLNYVVFTTCFRQEAGTAGKDTRGILRQHQFNKVELIKFTEPQDSYLELENMLQDAESVLQKLELPYRVIMLPSHELGFSASKTYDIEVWLPGSNNYREISSISNTESFQSLRANIKFYSKNKGKNKYVHTLNGSGLAIGRTLIAILENYQNKDGTITVPKVLRSYMRTDIIK</sequence>
<gene>
    <name evidence="1" type="primary">serS</name>
    <name type="ordered locus">ATP_00132</name>
</gene>
<evidence type="ECO:0000255" key="1">
    <source>
        <dbReference type="HAMAP-Rule" id="MF_00176"/>
    </source>
</evidence>
<name>SYS_PHYMT</name>
<feature type="chain" id="PRO_1000199497" description="Serine--tRNA ligase">
    <location>
        <begin position="1"/>
        <end position="423"/>
    </location>
</feature>
<feature type="binding site" evidence="1">
    <location>
        <begin position="231"/>
        <end position="233"/>
    </location>
    <ligand>
        <name>L-serine</name>
        <dbReference type="ChEBI" id="CHEBI:33384"/>
    </ligand>
</feature>
<feature type="binding site" evidence="1">
    <location>
        <begin position="262"/>
        <end position="264"/>
    </location>
    <ligand>
        <name>ATP</name>
        <dbReference type="ChEBI" id="CHEBI:30616"/>
    </ligand>
</feature>
<feature type="binding site" evidence="1">
    <location>
        <position position="285"/>
    </location>
    <ligand>
        <name>L-serine</name>
        <dbReference type="ChEBI" id="CHEBI:33384"/>
    </ligand>
</feature>
<feature type="binding site" evidence="1">
    <location>
        <begin position="349"/>
        <end position="352"/>
    </location>
    <ligand>
        <name>ATP</name>
        <dbReference type="ChEBI" id="CHEBI:30616"/>
    </ligand>
</feature>
<feature type="binding site" evidence="1">
    <location>
        <position position="385"/>
    </location>
    <ligand>
        <name>L-serine</name>
        <dbReference type="ChEBI" id="CHEBI:33384"/>
    </ligand>
</feature>
<comment type="function">
    <text evidence="1">Catalyzes the attachment of serine to tRNA(Ser). Is also able to aminoacylate tRNA(Sec) with serine, to form the misacylated tRNA L-seryl-tRNA(Sec), which will be further converted into selenocysteinyl-tRNA(Sec).</text>
</comment>
<comment type="catalytic activity">
    <reaction evidence="1">
        <text>tRNA(Ser) + L-serine + ATP = L-seryl-tRNA(Ser) + AMP + diphosphate + H(+)</text>
        <dbReference type="Rhea" id="RHEA:12292"/>
        <dbReference type="Rhea" id="RHEA-COMP:9669"/>
        <dbReference type="Rhea" id="RHEA-COMP:9703"/>
        <dbReference type="ChEBI" id="CHEBI:15378"/>
        <dbReference type="ChEBI" id="CHEBI:30616"/>
        <dbReference type="ChEBI" id="CHEBI:33019"/>
        <dbReference type="ChEBI" id="CHEBI:33384"/>
        <dbReference type="ChEBI" id="CHEBI:78442"/>
        <dbReference type="ChEBI" id="CHEBI:78533"/>
        <dbReference type="ChEBI" id="CHEBI:456215"/>
        <dbReference type="EC" id="6.1.1.11"/>
    </reaction>
</comment>
<comment type="catalytic activity">
    <reaction evidence="1">
        <text>tRNA(Sec) + L-serine + ATP = L-seryl-tRNA(Sec) + AMP + diphosphate + H(+)</text>
        <dbReference type="Rhea" id="RHEA:42580"/>
        <dbReference type="Rhea" id="RHEA-COMP:9742"/>
        <dbReference type="Rhea" id="RHEA-COMP:10128"/>
        <dbReference type="ChEBI" id="CHEBI:15378"/>
        <dbReference type="ChEBI" id="CHEBI:30616"/>
        <dbReference type="ChEBI" id="CHEBI:33019"/>
        <dbReference type="ChEBI" id="CHEBI:33384"/>
        <dbReference type="ChEBI" id="CHEBI:78442"/>
        <dbReference type="ChEBI" id="CHEBI:78533"/>
        <dbReference type="ChEBI" id="CHEBI:456215"/>
        <dbReference type="EC" id="6.1.1.11"/>
    </reaction>
</comment>
<comment type="pathway">
    <text evidence="1">Aminoacyl-tRNA biosynthesis; selenocysteinyl-tRNA(Sec) biosynthesis; L-seryl-tRNA(Sec) from L-serine and tRNA(Sec): step 1/1.</text>
</comment>
<comment type="subunit">
    <text evidence="1">Homodimer. The tRNA molecule binds across the dimer.</text>
</comment>
<comment type="subcellular location">
    <subcellularLocation>
        <location evidence="1">Cytoplasm</location>
    </subcellularLocation>
</comment>
<comment type="domain">
    <text evidence="1">Consists of two distinct domains, a catalytic core and a N-terminal extension that is involved in tRNA binding.</text>
</comment>
<comment type="similarity">
    <text evidence="1">Belongs to the class-II aminoacyl-tRNA synthetase family. Type-1 seryl-tRNA synthetase subfamily.</text>
</comment>
<keyword id="KW-0030">Aminoacyl-tRNA synthetase</keyword>
<keyword id="KW-0067">ATP-binding</keyword>
<keyword id="KW-0963">Cytoplasm</keyword>
<keyword id="KW-0436">Ligase</keyword>
<keyword id="KW-0547">Nucleotide-binding</keyword>
<keyword id="KW-0648">Protein biosynthesis</keyword>
<keyword id="KW-1185">Reference proteome</keyword>
<accession>B3R0F5</accession>
<dbReference type="EC" id="6.1.1.11" evidence="1"/>
<dbReference type="EMBL" id="CU469464">
    <property type="protein sequence ID" value="CAP18319.1"/>
    <property type="molecule type" value="Genomic_DNA"/>
</dbReference>
<dbReference type="SMR" id="B3R0F5"/>
<dbReference type="STRING" id="37692.ATP_00132"/>
<dbReference type="KEGG" id="pml:ATP_00132"/>
<dbReference type="eggNOG" id="COG0172">
    <property type="taxonomic scope" value="Bacteria"/>
</dbReference>
<dbReference type="HOGENOM" id="CLU_023797_1_1_14"/>
<dbReference type="UniPathway" id="UPA00906">
    <property type="reaction ID" value="UER00895"/>
</dbReference>
<dbReference type="Proteomes" id="UP000002020">
    <property type="component" value="Chromosome"/>
</dbReference>
<dbReference type="GO" id="GO:0005737">
    <property type="term" value="C:cytoplasm"/>
    <property type="evidence" value="ECO:0007669"/>
    <property type="project" value="UniProtKB-SubCell"/>
</dbReference>
<dbReference type="GO" id="GO:0005524">
    <property type="term" value="F:ATP binding"/>
    <property type="evidence" value="ECO:0007669"/>
    <property type="project" value="UniProtKB-UniRule"/>
</dbReference>
<dbReference type="GO" id="GO:0004828">
    <property type="term" value="F:serine-tRNA ligase activity"/>
    <property type="evidence" value="ECO:0007669"/>
    <property type="project" value="UniProtKB-UniRule"/>
</dbReference>
<dbReference type="GO" id="GO:0016260">
    <property type="term" value="P:selenocysteine biosynthetic process"/>
    <property type="evidence" value="ECO:0007669"/>
    <property type="project" value="UniProtKB-UniRule"/>
</dbReference>
<dbReference type="GO" id="GO:0006434">
    <property type="term" value="P:seryl-tRNA aminoacylation"/>
    <property type="evidence" value="ECO:0007669"/>
    <property type="project" value="UniProtKB-UniRule"/>
</dbReference>
<dbReference type="CDD" id="cd00770">
    <property type="entry name" value="SerRS_core"/>
    <property type="match status" value="1"/>
</dbReference>
<dbReference type="Gene3D" id="3.30.930.10">
    <property type="entry name" value="Bira Bifunctional Protein, Domain 2"/>
    <property type="match status" value="1"/>
</dbReference>
<dbReference type="Gene3D" id="1.10.287.40">
    <property type="entry name" value="Serine-tRNA synthetase, tRNA binding domain"/>
    <property type="match status" value="1"/>
</dbReference>
<dbReference type="HAMAP" id="MF_00176">
    <property type="entry name" value="Ser_tRNA_synth_type1"/>
    <property type="match status" value="1"/>
</dbReference>
<dbReference type="InterPro" id="IPR002314">
    <property type="entry name" value="aa-tRNA-synt_IIb"/>
</dbReference>
<dbReference type="InterPro" id="IPR006195">
    <property type="entry name" value="aa-tRNA-synth_II"/>
</dbReference>
<dbReference type="InterPro" id="IPR045864">
    <property type="entry name" value="aa-tRNA-synth_II/BPL/LPL"/>
</dbReference>
<dbReference type="InterPro" id="IPR002317">
    <property type="entry name" value="Ser-tRNA-ligase_type_1"/>
</dbReference>
<dbReference type="InterPro" id="IPR015866">
    <property type="entry name" value="Ser-tRNA-synth_1_N"/>
</dbReference>
<dbReference type="InterPro" id="IPR042103">
    <property type="entry name" value="SerRS_1_N_sf"/>
</dbReference>
<dbReference type="InterPro" id="IPR033729">
    <property type="entry name" value="SerRS_core"/>
</dbReference>
<dbReference type="InterPro" id="IPR010978">
    <property type="entry name" value="tRNA-bd_arm"/>
</dbReference>
<dbReference type="NCBIfam" id="TIGR00414">
    <property type="entry name" value="serS"/>
    <property type="match status" value="1"/>
</dbReference>
<dbReference type="PANTHER" id="PTHR43697:SF1">
    <property type="entry name" value="SERINE--TRNA LIGASE"/>
    <property type="match status" value="1"/>
</dbReference>
<dbReference type="PANTHER" id="PTHR43697">
    <property type="entry name" value="SERYL-TRNA SYNTHETASE"/>
    <property type="match status" value="1"/>
</dbReference>
<dbReference type="Pfam" id="PF02403">
    <property type="entry name" value="Seryl_tRNA_N"/>
    <property type="match status" value="1"/>
</dbReference>
<dbReference type="Pfam" id="PF00587">
    <property type="entry name" value="tRNA-synt_2b"/>
    <property type="match status" value="1"/>
</dbReference>
<dbReference type="PIRSF" id="PIRSF001529">
    <property type="entry name" value="Ser-tRNA-synth_IIa"/>
    <property type="match status" value="1"/>
</dbReference>
<dbReference type="PRINTS" id="PR00981">
    <property type="entry name" value="TRNASYNTHSER"/>
</dbReference>
<dbReference type="SUPFAM" id="SSF55681">
    <property type="entry name" value="Class II aaRS and biotin synthetases"/>
    <property type="match status" value="1"/>
</dbReference>
<dbReference type="SUPFAM" id="SSF46589">
    <property type="entry name" value="tRNA-binding arm"/>
    <property type="match status" value="1"/>
</dbReference>
<dbReference type="PROSITE" id="PS50862">
    <property type="entry name" value="AA_TRNA_LIGASE_II"/>
    <property type="match status" value="1"/>
</dbReference>
<reference key="1">
    <citation type="journal article" date="2008" name="BMC Genomics">
        <title>The linear chromosome of the plant-pathogenic mycoplasma 'Candidatus Phytoplasma mali'.</title>
        <authorList>
            <person name="Kube M."/>
            <person name="Schneider B."/>
            <person name="Kuhl H."/>
            <person name="Dandekar T."/>
            <person name="Heitmann K."/>
            <person name="Migdoll A.M."/>
            <person name="Reinhardt R."/>
            <person name="Seemueller E."/>
        </authorList>
    </citation>
    <scope>NUCLEOTIDE SEQUENCE [LARGE SCALE GENOMIC DNA]</scope>
    <source>
        <strain>AT</strain>
    </source>
</reference>
<organism>
    <name type="scientific">Phytoplasma mali (strain AT)</name>
    <dbReference type="NCBI Taxonomy" id="482235"/>
    <lineage>
        <taxon>Bacteria</taxon>
        <taxon>Bacillati</taxon>
        <taxon>Mycoplasmatota</taxon>
        <taxon>Mollicutes</taxon>
        <taxon>Acholeplasmatales</taxon>
        <taxon>Acholeplasmataceae</taxon>
        <taxon>Candidatus Phytoplasma</taxon>
        <taxon>16SrX (Apple proliferation group)</taxon>
    </lineage>
</organism>
<proteinExistence type="inferred from homology"/>